<protein>
    <recommendedName>
        <fullName evidence="1">Cell division protein ZipA</fullName>
    </recommendedName>
</protein>
<proteinExistence type="inferred from homology"/>
<comment type="function">
    <text evidence="1">Essential cell division protein that stabilizes the FtsZ protofilaments by cross-linking them and that serves as a cytoplasmic membrane anchor for the Z ring. Also required for the recruitment to the septal ring of downstream cell division proteins.</text>
</comment>
<comment type="subunit">
    <text evidence="1">Interacts with FtsZ via their C-terminal domains.</text>
</comment>
<comment type="subcellular location">
    <subcellularLocation>
        <location evidence="1">Cell inner membrane</location>
        <topology evidence="1">Single-pass type I membrane protein</topology>
    </subcellularLocation>
    <text evidence="1">Localizes to the Z ring in an FtsZ-dependent manner.</text>
</comment>
<comment type="similarity">
    <text evidence="1">Belongs to the ZipA family.</text>
</comment>
<name>ZIPA_PECCP</name>
<gene>
    <name evidence="1" type="primary">zipA</name>
    <name type="ordered locus">PC1_0778</name>
</gene>
<organism>
    <name type="scientific">Pectobacterium carotovorum subsp. carotovorum (strain PC1)</name>
    <dbReference type="NCBI Taxonomy" id="561230"/>
    <lineage>
        <taxon>Bacteria</taxon>
        <taxon>Pseudomonadati</taxon>
        <taxon>Pseudomonadota</taxon>
        <taxon>Gammaproteobacteria</taxon>
        <taxon>Enterobacterales</taxon>
        <taxon>Pectobacteriaceae</taxon>
        <taxon>Pectobacterium</taxon>
    </lineage>
</organism>
<evidence type="ECO:0000255" key="1">
    <source>
        <dbReference type="HAMAP-Rule" id="MF_00509"/>
    </source>
</evidence>
<evidence type="ECO:0000256" key="2">
    <source>
        <dbReference type="SAM" id="MobiDB-lite"/>
    </source>
</evidence>
<accession>C6D9P6</accession>
<sequence length="336" mass="36657">MMQDLRLILIVVGAIAIIALLLHGLWTSRKERSSLFRDRPVKRAKKARDETPLDELDEGVGEVRVKGARSQQNEPSFSSSSFDNASFDNHSAREELRSEATSPFEHLSPASSYDPLLDEATPVDSPRSQVRGDSNPQVVNPRETPIQPSIDTPRESFAYDAPPSAPQQPAAHSLHEKVQPAPAQPQQPAEPVEPVAAKEAVLVLHVVAHQGGVIGGELLLQSLLQAGFQFGEMNIFHRHVNPAGAGPVLFSLANMVKPGSFNVDAMSEFSTPGVSIFMMVPSYGDASQNFKLMLQSAQRIADDVGGVVQDDERRMMTPQKVESYKARIRDVLKANA</sequence>
<feature type="chain" id="PRO_1000206610" description="Cell division protein ZipA">
    <location>
        <begin position="1"/>
        <end position="336"/>
    </location>
</feature>
<feature type="topological domain" description="Periplasmic" evidence="1">
    <location>
        <begin position="1"/>
        <end position="6"/>
    </location>
</feature>
<feature type="transmembrane region" description="Helical" evidence="1">
    <location>
        <begin position="7"/>
        <end position="27"/>
    </location>
</feature>
<feature type="topological domain" description="Cytoplasmic" evidence="1">
    <location>
        <begin position="28"/>
        <end position="336"/>
    </location>
</feature>
<feature type="region of interest" description="Disordered" evidence="2">
    <location>
        <begin position="40"/>
        <end position="190"/>
    </location>
</feature>
<feature type="compositionally biased region" description="Basic and acidic residues" evidence="2">
    <location>
        <begin position="40"/>
        <end position="51"/>
    </location>
</feature>
<feature type="compositionally biased region" description="Low complexity" evidence="2">
    <location>
        <begin position="76"/>
        <end position="89"/>
    </location>
</feature>
<feature type="compositionally biased region" description="Polar residues" evidence="2">
    <location>
        <begin position="126"/>
        <end position="138"/>
    </location>
</feature>
<feature type="compositionally biased region" description="Low complexity" evidence="2">
    <location>
        <begin position="179"/>
        <end position="190"/>
    </location>
</feature>
<dbReference type="EMBL" id="CP001657">
    <property type="protein sequence ID" value="ACT11832.1"/>
    <property type="molecule type" value="Genomic_DNA"/>
</dbReference>
<dbReference type="SMR" id="C6D9P6"/>
<dbReference type="STRING" id="561230.PC1_0778"/>
<dbReference type="KEGG" id="pct:PC1_0778"/>
<dbReference type="eggNOG" id="COG3115">
    <property type="taxonomic scope" value="Bacteria"/>
</dbReference>
<dbReference type="HOGENOM" id="CLU_030174_1_0_6"/>
<dbReference type="Proteomes" id="UP000002736">
    <property type="component" value="Chromosome"/>
</dbReference>
<dbReference type="GO" id="GO:0032153">
    <property type="term" value="C:cell division site"/>
    <property type="evidence" value="ECO:0007669"/>
    <property type="project" value="UniProtKB-UniRule"/>
</dbReference>
<dbReference type="GO" id="GO:0005886">
    <property type="term" value="C:plasma membrane"/>
    <property type="evidence" value="ECO:0007669"/>
    <property type="project" value="UniProtKB-SubCell"/>
</dbReference>
<dbReference type="GO" id="GO:0000917">
    <property type="term" value="P:division septum assembly"/>
    <property type="evidence" value="ECO:0007669"/>
    <property type="project" value="TreeGrafter"/>
</dbReference>
<dbReference type="GO" id="GO:0043093">
    <property type="term" value="P:FtsZ-dependent cytokinesis"/>
    <property type="evidence" value="ECO:0007669"/>
    <property type="project" value="UniProtKB-UniRule"/>
</dbReference>
<dbReference type="CDD" id="cd00231">
    <property type="entry name" value="ZipA"/>
    <property type="match status" value="1"/>
</dbReference>
<dbReference type="FunFam" id="3.30.1400.10:FF:000001">
    <property type="entry name" value="Cell division protein ZipA"/>
    <property type="match status" value="1"/>
</dbReference>
<dbReference type="Gene3D" id="3.30.1400.10">
    <property type="entry name" value="ZipA, C-terminal FtsZ-binding domain"/>
    <property type="match status" value="1"/>
</dbReference>
<dbReference type="HAMAP" id="MF_00509">
    <property type="entry name" value="ZipA"/>
    <property type="match status" value="1"/>
</dbReference>
<dbReference type="InterPro" id="IPR011919">
    <property type="entry name" value="Cell_div_ZipA"/>
</dbReference>
<dbReference type="InterPro" id="IPR007449">
    <property type="entry name" value="ZipA_FtsZ-bd_C"/>
</dbReference>
<dbReference type="InterPro" id="IPR036765">
    <property type="entry name" value="ZipA_FtsZ-bd_C_sf"/>
</dbReference>
<dbReference type="NCBIfam" id="TIGR02205">
    <property type="entry name" value="septum_zipA"/>
    <property type="match status" value="1"/>
</dbReference>
<dbReference type="PANTHER" id="PTHR38685">
    <property type="entry name" value="CELL DIVISION PROTEIN ZIPA"/>
    <property type="match status" value="1"/>
</dbReference>
<dbReference type="PANTHER" id="PTHR38685:SF1">
    <property type="entry name" value="CELL DIVISION PROTEIN ZIPA"/>
    <property type="match status" value="1"/>
</dbReference>
<dbReference type="Pfam" id="PF04354">
    <property type="entry name" value="ZipA_C"/>
    <property type="match status" value="1"/>
</dbReference>
<dbReference type="SMART" id="SM00771">
    <property type="entry name" value="ZipA_C"/>
    <property type="match status" value="1"/>
</dbReference>
<dbReference type="SUPFAM" id="SSF64383">
    <property type="entry name" value="Cell-division protein ZipA, C-terminal domain"/>
    <property type="match status" value="1"/>
</dbReference>
<reference key="1">
    <citation type="submission" date="2009-07" db="EMBL/GenBank/DDBJ databases">
        <title>Complete sequence of Pectobacterium carotovorum subsp. carotovorum PC1.</title>
        <authorList>
            <consortium name="US DOE Joint Genome Institute"/>
            <person name="Lucas S."/>
            <person name="Copeland A."/>
            <person name="Lapidus A."/>
            <person name="Glavina del Rio T."/>
            <person name="Tice H."/>
            <person name="Bruce D."/>
            <person name="Goodwin L."/>
            <person name="Pitluck S."/>
            <person name="Munk A.C."/>
            <person name="Brettin T."/>
            <person name="Detter J.C."/>
            <person name="Han C."/>
            <person name="Tapia R."/>
            <person name="Larimer F."/>
            <person name="Land M."/>
            <person name="Hauser L."/>
            <person name="Kyrpides N."/>
            <person name="Mikhailova N."/>
            <person name="Balakrishnan V."/>
            <person name="Glasner J."/>
            <person name="Perna N.T."/>
        </authorList>
    </citation>
    <scope>NUCLEOTIDE SEQUENCE [LARGE SCALE GENOMIC DNA]</scope>
    <source>
        <strain>PC1</strain>
    </source>
</reference>
<keyword id="KW-0131">Cell cycle</keyword>
<keyword id="KW-0132">Cell division</keyword>
<keyword id="KW-0997">Cell inner membrane</keyword>
<keyword id="KW-1003">Cell membrane</keyword>
<keyword id="KW-0472">Membrane</keyword>
<keyword id="KW-0812">Transmembrane</keyword>
<keyword id="KW-1133">Transmembrane helix</keyword>